<dbReference type="EMBL" id="D84432">
    <property type="protein sequence ID" value="BAA12499.1"/>
    <property type="molecule type" value="Genomic_DNA"/>
</dbReference>
<dbReference type="EMBL" id="AL009126">
    <property type="protein sequence ID" value="CAB14440.2"/>
    <property type="molecule type" value="Genomic_DNA"/>
</dbReference>
<dbReference type="PIR" id="H69954">
    <property type="entry name" value="H69954"/>
</dbReference>
<dbReference type="RefSeq" id="NP_390389.2">
    <property type="nucleotide sequence ID" value="NC_000964.3"/>
</dbReference>
<dbReference type="RefSeq" id="WP_004398578.1">
    <property type="nucleotide sequence ID" value="NZ_OZ025638.1"/>
</dbReference>
<dbReference type="SMR" id="P54479"/>
<dbReference type="FunCoup" id="P54479">
    <property type="interactions" value="19"/>
</dbReference>
<dbReference type="STRING" id="224308.BSU25100"/>
<dbReference type="jPOST" id="P54479"/>
<dbReference type="PaxDb" id="224308-BSU25100"/>
<dbReference type="EnsemblBacteria" id="CAB14440">
    <property type="protein sequence ID" value="CAB14440"/>
    <property type="gene ID" value="BSU_25100"/>
</dbReference>
<dbReference type="GeneID" id="86872941"/>
<dbReference type="GeneID" id="937968"/>
<dbReference type="KEGG" id="bsu:BSU25100"/>
<dbReference type="PATRIC" id="fig|224308.179.peg.2729"/>
<dbReference type="eggNOG" id="COG0735">
    <property type="taxonomic scope" value="Bacteria"/>
</dbReference>
<dbReference type="InParanoid" id="P54479"/>
<dbReference type="OrthoDB" id="8659436at2"/>
<dbReference type="PhylomeDB" id="P54479"/>
<dbReference type="BioCyc" id="BSUB:BSU25100-MONOMER"/>
<dbReference type="Proteomes" id="UP000001570">
    <property type="component" value="Chromosome"/>
</dbReference>
<dbReference type="CollecTF" id="EXPREG_00000b30"/>
<dbReference type="GO" id="GO:0005737">
    <property type="term" value="C:cytoplasm"/>
    <property type="evidence" value="ECO:0007669"/>
    <property type="project" value="UniProtKB-SubCell"/>
</dbReference>
<dbReference type="GO" id="GO:0032993">
    <property type="term" value="C:protein-DNA complex"/>
    <property type="evidence" value="ECO:0000315"/>
    <property type="project" value="CollecTF"/>
</dbReference>
<dbReference type="GO" id="GO:0003700">
    <property type="term" value="F:DNA-binding transcription factor activity"/>
    <property type="evidence" value="ECO:0000318"/>
    <property type="project" value="GO_Central"/>
</dbReference>
<dbReference type="GO" id="GO:0001217">
    <property type="term" value="F:DNA-binding transcription repressor activity"/>
    <property type="evidence" value="ECO:0000315"/>
    <property type="project" value="CollecTF"/>
</dbReference>
<dbReference type="GO" id="GO:0000976">
    <property type="term" value="F:transcription cis-regulatory region binding"/>
    <property type="evidence" value="ECO:0000315"/>
    <property type="project" value="CollecTF"/>
</dbReference>
<dbReference type="GO" id="GO:0008270">
    <property type="term" value="F:zinc ion binding"/>
    <property type="evidence" value="ECO:0000318"/>
    <property type="project" value="GO_Central"/>
</dbReference>
<dbReference type="GO" id="GO:0045892">
    <property type="term" value="P:negative regulation of DNA-templated transcription"/>
    <property type="evidence" value="ECO:0000270"/>
    <property type="project" value="CollecTF"/>
</dbReference>
<dbReference type="GO" id="GO:1900376">
    <property type="term" value="P:regulation of secondary metabolite biosynthetic process"/>
    <property type="evidence" value="ECO:0000318"/>
    <property type="project" value="GO_Central"/>
</dbReference>
<dbReference type="CDD" id="cd07153">
    <property type="entry name" value="Fur_like"/>
    <property type="match status" value="1"/>
</dbReference>
<dbReference type="FunFam" id="3.30.1490.190:FF:000005">
    <property type="entry name" value="Fur family transcriptional regulator"/>
    <property type="match status" value="1"/>
</dbReference>
<dbReference type="FunFam" id="1.10.10.10:FF:000169">
    <property type="entry name" value="Transcriptional regulator, Fur family"/>
    <property type="match status" value="1"/>
</dbReference>
<dbReference type="Gene3D" id="3.30.1490.190">
    <property type="match status" value="1"/>
</dbReference>
<dbReference type="Gene3D" id="1.10.10.10">
    <property type="entry name" value="Winged helix-like DNA-binding domain superfamily/Winged helix DNA-binding domain"/>
    <property type="match status" value="1"/>
</dbReference>
<dbReference type="InterPro" id="IPR002481">
    <property type="entry name" value="FUR"/>
</dbReference>
<dbReference type="InterPro" id="IPR043135">
    <property type="entry name" value="Fur_C"/>
</dbReference>
<dbReference type="InterPro" id="IPR036388">
    <property type="entry name" value="WH-like_DNA-bd_sf"/>
</dbReference>
<dbReference type="InterPro" id="IPR036390">
    <property type="entry name" value="WH_DNA-bd_sf"/>
</dbReference>
<dbReference type="PANTHER" id="PTHR33202:SF1">
    <property type="entry name" value="FERRIC UPTAKE REGULATION PROTEIN"/>
    <property type="match status" value="1"/>
</dbReference>
<dbReference type="PANTHER" id="PTHR33202">
    <property type="entry name" value="ZINC UPTAKE REGULATION PROTEIN"/>
    <property type="match status" value="1"/>
</dbReference>
<dbReference type="Pfam" id="PF01475">
    <property type="entry name" value="FUR"/>
    <property type="match status" value="1"/>
</dbReference>
<dbReference type="SUPFAM" id="SSF46785">
    <property type="entry name" value="Winged helix' DNA-binding domain"/>
    <property type="match status" value="1"/>
</dbReference>
<gene>
    <name type="primary">zur</name>
    <name type="synonym">yqfV</name>
    <name type="ordered locus">BSU25100</name>
</gene>
<sequence length="145" mass="16637">MNVQEALNLLKENGYKYTNKREDMLQLFADSDRYLTAKNVLSALNDDYPGLSFDTIYRNLSLYEELGILETTELSGEKLFRFKCSFTHHHHHFICLACGKTKEIESCPMDKLCDDLDGYQVSGHKFEIYGTCPDCTAENQENTTA</sequence>
<proteinExistence type="evidence at protein level"/>
<organism>
    <name type="scientific">Bacillus subtilis (strain 168)</name>
    <dbReference type="NCBI Taxonomy" id="224308"/>
    <lineage>
        <taxon>Bacteria</taxon>
        <taxon>Bacillati</taxon>
        <taxon>Bacillota</taxon>
        <taxon>Bacilli</taxon>
        <taxon>Bacillales</taxon>
        <taxon>Bacillaceae</taxon>
        <taxon>Bacillus</taxon>
    </lineage>
</organism>
<reference key="1">
    <citation type="journal article" date="1996" name="Microbiology">
        <title>Systematic sequencing of the 283 kb 210 degrees-232 degrees region of the Bacillus subtilis genome containing the skin element and many sporulation genes.</title>
        <authorList>
            <person name="Mizuno M."/>
            <person name="Masuda S."/>
            <person name="Takemaru K."/>
            <person name="Hosono S."/>
            <person name="Sato T."/>
            <person name="Takeuchi M."/>
            <person name="Kobayashi Y."/>
        </authorList>
    </citation>
    <scope>NUCLEOTIDE SEQUENCE [GENOMIC DNA]</scope>
    <source>
        <strain>168 / JH642</strain>
    </source>
</reference>
<reference key="2">
    <citation type="journal article" date="1997" name="Nature">
        <title>The complete genome sequence of the Gram-positive bacterium Bacillus subtilis.</title>
        <authorList>
            <person name="Kunst F."/>
            <person name="Ogasawara N."/>
            <person name="Moszer I."/>
            <person name="Albertini A.M."/>
            <person name="Alloni G."/>
            <person name="Azevedo V."/>
            <person name="Bertero M.G."/>
            <person name="Bessieres P."/>
            <person name="Bolotin A."/>
            <person name="Borchert S."/>
            <person name="Borriss R."/>
            <person name="Boursier L."/>
            <person name="Brans A."/>
            <person name="Braun M."/>
            <person name="Brignell S.C."/>
            <person name="Bron S."/>
            <person name="Brouillet S."/>
            <person name="Bruschi C.V."/>
            <person name="Caldwell B."/>
            <person name="Capuano V."/>
            <person name="Carter N.M."/>
            <person name="Choi S.-K."/>
            <person name="Codani J.-J."/>
            <person name="Connerton I.F."/>
            <person name="Cummings N.J."/>
            <person name="Daniel R.A."/>
            <person name="Denizot F."/>
            <person name="Devine K.M."/>
            <person name="Duesterhoeft A."/>
            <person name="Ehrlich S.D."/>
            <person name="Emmerson P.T."/>
            <person name="Entian K.-D."/>
            <person name="Errington J."/>
            <person name="Fabret C."/>
            <person name="Ferrari E."/>
            <person name="Foulger D."/>
            <person name="Fritz C."/>
            <person name="Fujita M."/>
            <person name="Fujita Y."/>
            <person name="Fuma S."/>
            <person name="Galizzi A."/>
            <person name="Galleron N."/>
            <person name="Ghim S.-Y."/>
            <person name="Glaser P."/>
            <person name="Goffeau A."/>
            <person name="Golightly E.J."/>
            <person name="Grandi G."/>
            <person name="Guiseppi G."/>
            <person name="Guy B.J."/>
            <person name="Haga K."/>
            <person name="Haiech J."/>
            <person name="Harwood C.R."/>
            <person name="Henaut A."/>
            <person name="Hilbert H."/>
            <person name="Holsappel S."/>
            <person name="Hosono S."/>
            <person name="Hullo M.-F."/>
            <person name="Itaya M."/>
            <person name="Jones L.-M."/>
            <person name="Joris B."/>
            <person name="Karamata D."/>
            <person name="Kasahara Y."/>
            <person name="Klaerr-Blanchard M."/>
            <person name="Klein C."/>
            <person name="Kobayashi Y."/>
            <person name="Koetter P."/>
            <person name="Koningstein G."/>
            <person name="Krogh S."/>
            <person name="Kumano M."/>
            <person name="Kurita K."/>
            <person name="Lapidus A."/>
            <person name="Lardinois S."/>
            <person name="Lauber J."/>
            <person name="Lazarevic V."/>
            <person name="Lee S.-M."/>
            <person name="Levine A."/>
            <person name="Liu H."/>
            <person name="Masuda S."/>
            <person name="Mauel C."/>
            <person name="Medigue C."/>
            <person name="Medina N."/>
            <person name="Mellado R.P."/>
            <person name="Mizuno M."/>
            <person name="Moestl D."/>
            <person name="Nakai S."/>
            <person name="Noback M."/>
            <person name="Noone D."/>
            <person name="O'Reilly M."/>
            <person name="Ogawa K."/>
            <person name="Ogiwara A."/>
            <person name="Oudega B."/>
            <person name="Park S.-H."/>
            <person name="Parro V."/>
            <person name="Pohl T.M."/>
            <person name="Portetelle D."/>
            <person name="Porwollik S."/>
            <person name="Prescott A.M."/>
            <person name="Presecan E."/>
            <person name="Pujic P."/>
            <person name="Purnelle B."/>
            <person name="Rapoport G."/>
            <person name="Rey M."/>
            <person name="Reynolds S."/>
            <person name="Rieger M."/>
            <person name="Rivolta C."/>
            <person name="Rocha E."/>
            <person name="Roche B."/>
            <person name="Rose M."/>
            <person name="Sadaie Y."/>
            <person name="Sato T."/>
            <person name="Scanlan E."/>
            <person name="Schleich S."/>
            <person name="Schroeter R."/>
            <person name="Scoffone F."/>
            <person name="Sekiguchi J."/>
            <person name="Sekowska A."/>
            <person name="Seror S.J."/>
            <person name="Serror P."/>
            <person name="Shin B.-S."/>
            <person name="Soldo B."/>
            <person name="Sorokin A."/>
            <person name="Tacconi E."/>
            <person name="Takagi T."/>
            <person name="Takahashi H."/>
            <person name="Takemaru K."/>
            <person name="Takeuchi M."/>
            <person name="Tamakoshi A."/>
            <person name="Tanaka T."/>
            <person name="Terpstra P."/>
            <person name="Tognoni A."/>
            <person name="Tosato V."/>
            <person name="Uchiyama S."/>
            <person name="Vandenbol M."/>
            <person name="Vannier F."/>
            <person name="Vassarotti A."/>
            <person name="Viari A."/>
            <person name="Wambutt R."/>
            <person name="Wedler E."/>
            <person name="Wedler H."/>
            <person name="Weitzenegger T."/>
            <person name="Winters P."/>
            <person name="Wipat A."/>
            <person name="Yamamoto H."/>
            <person name="Yamane K."/>
            <person name="Yasumoto K."/>
            <person name="Yata K."/>
            <person name="Yoshida K."/>
            <person name="Yoshikawa H.-F."/>
            <person name="Zumstein E."/>
            <person name="Yoshikawa H."/>
            <person name="Danchin A."/>
        </authorList>
    </citation>
    <scope>NUCLEOTIDE SEQUENCE [LARGE SCALE GENOMIC DNA]</scope>
    <source>
        <strain>168</strain>
    </source>
</reference>
<reference key="3">
    <citation type="journal article" date="2009" name="Microbiology">
        <title>From a consortium sequence to a unified sequence: the Bacillus subtilis 168 reference genome a decade later.</title>
        <authorList>
            <person name="Barbe V."/>
            <person name="Cruveiller S."/>
            <person name="Kunst F."/>
            <person name="Lenoble P."/>
            <person name="Meurice G."/>
            <person name="Sekowska A."/>
            <person name="Vallenet D."/>
            <person name="Wang T."/>
            <person name="Moszer I."/>
            <person name="Medigue C."/>
            <person name="Danchin A."/>
        </authorList>
    </citation>
    <scope>SEQUENCE REVISION TO 12</scope>
</reference>
<reference key="4">
    <citation type="journal article" date="1998" name="J. Bacteriol.">
        <title>Identification of a zinc-specific metalloregulatory protein, Zur, controlling zinc transport operons in Bacillus subtilis.</title>
        <authorList>
            <person name="Gaballa A."/>
            <person name="Helmann J.D."/>
        </authorList>
    </citation>
    <scope>CHARACTERIZATION</scope>
    <scope>FUNCTION</scope>
</reference>
<reference key="5">
    <citation type="journal article" date="2004" name="Mol. Microbiol.">
        <title>Zinc is a key factor in controlling alternation of two types of L31 protein in the Bacillus subtilis ribosome.</title>
        <authorList>
            <person name="Nanamiya H."/>
            <person name="Akanuma G."/>
            <person name="Natori Y."/>
            <person name="Murayama R."/>
            <person name="Kosono S."/>
            <person name="Kudo T."/>
            <person name="Kobayashi K."/>
            <person name="Ogasawara N."/>
            <person name="Park S.-M."/>
            <person name="Ochi K."/>
            <person name="Kawamura F."/>
        </authorList>
    </citation>
    <scope>FUNCTION IN REPRESSION OF EXPRESSION OF RIBOSOMAL PROTEIN RL31B</scope>
    <source>
        <strain>168</strain>
    </source>
</reference>
<reference key="6">
    <citation type="journal article" date="2011" name="Nucleic Acids Res.">
        <title>Sequential binding and sensing of Zn(II) by Bacillus subtilis Zur.</title>
        <authorList>
            <person name="Ma Z."/>
            <person name="Gabriel S.E."/>
            <person name="Helmann J.D."/>
        </authorList>
    </citation>
    <scope>FUNCTION</scope>
    <scope>DNA-BINDING</scope>
    <scope>ACTIVITY REGULATION</scope>
    <scope>SUBUNIT</scope>
    <scope>DOMAIN</scope>
    <scope>ZINC-BINDING</scope>
    <scope>MUTAGENESIS OF GLU-70; CYS-84; HIS-89; HIS-90; HIS-91; HIS-92; CYS-95; CYS-98; ASP-110; HIS-124; CYS-132 AND CYS-135</scope>
</reference>
<name>ZUR_BACSU</name>
<feature type="chain" id="PRO_0000095591" description="Zinc-specific metallo-regulatory protein">
    <location>
        <begin position="1"/>
        <end position="145"/>
    </location>
</feature>
<feature type="mutagenesis site" description="Does not affect repressor activity." evidence="3">
    <original>E</original>
    <variation>A</variation>
    <location>
        <position position="70"/>
    </location>
</feature>
<feature type="mutagenesis site" description="Decrease in repressor activity." evidence="3">
    <original>C</original>
    <variation>S</variation>
    <location>
        <position position="84"/>
    </location>
</feature>
<feature type="mutagenesis site" description="Decrease in repressor activity." evidence="3">
    <original>H</original>
    <variation>A</variation>
    <location>
        <position position="89"/>
    </location>
</feature>
<feature type="mutagenesis site" description="Decrease in repressor activity." evidence="3">
    <original>H</original>
    <variation>A</variation>
    <location>
        <position position="90"/>
    </location>
</feature>
<feature type="mutagenesis site" description="Decrease in repressor activity." evidence="3">
    <original>H</original>
    <variation>A</variation>
    <location>
        <position position="91"/>
    </location>
</feature>
<feature type="mutagenesis site" description="Decrease in repressor activity." evidence="3">
    <original>H</original>
    <variation>A</variation>
    <location>
        <position position="92"/>
    </location>
</feature>
<feature type="mutagenesis site" description="Lack of repressor activity." evidence="3">
    <original>C</original>
    <variation>S</variation>
    <location>
        <position position="95"/>
    </location>
</feature>
<feature type="mutagenesis site" description="Lack of repressor activity." evidence="3">
    <original>C</original>
    <variation>S</variation>
    <location>
        <position position="98"/>
    </location>
</feature>
<feature type="mutagenesis site" description="Does not affect repressor activity." evidence="3">
    <original>D</original>
    <variation>A</variation>
    <location>
        <position position="110"/>
    </location>
</feature>
<feature type="mutagenesis site" description="Strong decrease in repressor activity." evidence="3">
    <original>H</original>
    <variation>A</variation>
    <location>
        <position position="124"/>
    </location>
</feature>
<feature type="mutagenesis site" description="Strong decrease in repressor activity." evidence="3">
    <original>C</original>
    <variation>S</variation>
    <location>
        <position position="132"/>
    </location>
</feature>
<feature type="mutagenesis site" description="Strong decrease in repressor activity." evidence="3">
    <original>C</original>
    <variation>S</variation>
    <location>
        <position position="135"/>
    </location>
</feature>
<feature type="sequence conflict" description="In Ref. 1; BAA12499." evidence="5" ref="1">
    <original>E</original>
    <variation>G</variation>
    <location>
        <position position="12"/>
    </location>
</feature>
<evidence type="ECO:0000250" key="1"/>
<evidence type="ECO:0000269" key="2">
    <source>
    </source>
</evidence>
<evidence type="ECO:0000269" key="3">
    <source>
    </source>
</evidence>
<evidence type="ECO:0000269" key="4">
    <source>
    </source>
</evidence>
<evidence type="ECO:0000305" key="5"/>
<keyword id="KW-0963">Cytoplasm</keyword>
<keyword id="KW-0238">DNA-binding</keyword>
<keyword id="KW-0479">Metal-binding</keyword>
<keyword id="KW-1185">Reference proteome</keyword>
<keyword id="KW-0678">Repressor</keyword>
<keyword id="KW-0804">Transcription</keyword>
<keyword id="KW-0805">Transcription regulation</keyword>
<keyword id="KW-0862">Zinc</keyword>
<protein>
    <recommendedName>
        <fullName>Zinc-specific metallo-regulatory protein</fullName>
    </recommendedName>
</protein>
<comment type="function">
    <text evidence="2 3 4">Acts as a negative controlling element, employing Zn(2+) as a cofactor to bind the operator of the repressed genes. Required for the zinc-specific repression of two operons implicated in zinc uptake, yciC and ycdHIyceA. Also represses the expression of rpmE2, the gene for ribosomal protein L31B, which is expressed only after the end of exponential growth.</text>
</comment>
<comment type="activity regulation">
    <text evidence="3">Sequentially activated from an inactive dimer (Zur(2):Zn(2)) to a partially active asymmetric dimer (Zur(2):Zn(3)), and finally to the fully zinc-loaded active form (Zur(2):Zn(4)). Binds a maximum of 4 Zn(2+) ions per dimer.</text>
</comment>
<comment type="subunit">
    <text evidence="3">Homodimer.</text>
</comment>
<comment type="subcellular location">
    <subcellularLocation>
        <location evidence="1">Cytoplasm</location>
    </subcellularLocation>
</comment>
<comment type="domain">
    <text evidence="3">Contains 3 zinc-binding sites. Site 1 has a structural role and site 2 is the Zn(2+) sensing site. Site 3 residues do not bind metal ions with a physiologically relevant affinity, but contribute to dimer stability.</text>
</comment>
<comment type="similarity">
    <text evidence="5">Belongs to the Fur family.</text>
</comment>
<accession>P54479</accession>